<proteinExistence type="inferred from homology"/>
<accession>Q8DCL3</accession>
<gene>
    <name evidence="1" type="primary">rplI</name>
    <name type="ordered locus">VV1_1390</name>
</gene>
<keyword id="KW-0687">Ribonucleoprotein</keyword>
<keyword id="KW-0689">Ribosomal protein</keyword>
<keyword id="KW-0694">RNA-binding</keyword>
<keyword id="KW-0699">rRNA-binding</keyword>
<feature type="chain" id="PRO_0000176703" description="Large ribosomal subunit protein bL9">
    <location>
        <begin position="1"/>
        <end position="149"/>
    </location>
</feature>
<dbReference type="EMBL" id="AE016795">
    <property type="protein sequence ID" value="AAO09839.1"/>
    <property type="molecule type" value="Genomic_DNA"/>
</dbReference>
<dbReference type="RefSeq" id="WP_011079364.1">
    <property type="nucleotide sequence ID" value="NC_004459.3"/>
</dbReference>
<dbReference type="SMR" id="Q8DCL3"/>
<dbReference type="KEGG" id="vvu:VV1_1390"/>
<dbReference type="HOGENOM" id="CLU_078938_4_1_6"/>
<dbReference type="Proteomes" id="UP000002275">
    <property type="component" value="Chromosome 1"/>
</dbReference>
<dbReference type="GO" id="GO:1990904">
    <property type="term" value="C:ribonucleoprotein complex"/>
    <property type="evidence" value="ECO:0007669"/>
    <property type="project" value="UniProtKB-KW"/>
</dbReference>
<dbReference type="GO" id="GO:0005840">
    <property type="term" value="C:ribosome"/>
    <property type="evidence" value="ECO:0007669"/>
    <property type="project" value="UniProtKB-KW"/>
</dbReference>
<dbReference type="GO" id="GO:0019843">
    <property type="term" value="F:rRNA binding"/>
    <property type="evidence" value="ECO:0007669"/>
    <property type="project" value="UniProtKB-UniRule"/>
</dbReference>
<dbReference type="GO" id="GO:0003735">
    <property type="term" value="F:structural constituent of ribosome"/>
    <property type="evidence" value="ECO:0007669"/>
    <property type="project" value="InterPro"/>
</dbReference>
<dbReference type="GO" id="GO:0006412">
    <property type="term" value="P:translation"/>
    <property type="evidence" value="ECO:0007669"/>
    <property type="project" value="UniProtKB-UniRule"/>
</dbReference>
<dbReference type="FunFam" id="3.10.430.100:FF:000001">
    <property type="entry name" value="50S ribosomal protein L9"/>
    <property type="match status" value="1"/>
</dbReference>
<dbReference type="FunFam" id="3.40.5.10:FF:000001">
    <property type="entry name" value="50S ribosomal protein L9"/>
    <property type="match status" value="1"/>
</dbReference>
<dbReference type="Gene3D" id="3.10.430.100">
    <property type="entry name" value="Ribosomal protein L9, C-terminal domain"/>
    <property type="match status" value="1"/>
</dbReference>
<dbReference type="Gene3D" id="3.40.5.10">
    <property type="entry name" value="Ribosomal protein L9, N-terminal domain"/>
    <property type="match status" value="1"/>
</dbReference>
<dbReference type="HAMAP" id="MF_00503">
    <property type="entry name" value="Ribosomal_bL9"/>
    <property type="match status" value="1"/>
</dbReference>
<dbReference type="InterPro" id="IPR000244">
    <property type="entry name" value="Ribosomal_bL9"/>
</dbReference>
<dbReference type="InterPro" id="IPR009027">
    <property type="entry name" value="Ribosomal_bL9/RNase_H1_N"/>
</dbReference>
<dbReference type="InterPro" id="IPR020594">
    <property type="entry name" value="Ribosomal_bL9_bac/chp"/>
</dbReference>
<dbReference type="InterPro" id="IPR020069">
    <property type="entry name" value="Ribosomal_bL9_C"/>
</dbReference>
<dbReference type="InterPro" id="IPR036791">
    <property type="entry name" value="Ribosomal_bL9_C_sf"/>
</dbReference>
<dbReference type="InterPro" id="IPR020070">
    <property type="entry name" value="Ribosomal_bL9_N"/>
</dbReference>
<dbReference type="InterPro" id="IPR036935">
    <property type="entry name" value="Ribosomal_bL9_N_sf"/>
</dbReference>
<dbReference type="NCBIfam" id="TIGR00158">
    <property type="entry name" value="L9"/>
    <property type="match status" value="1"/>
</dbReference>
<dbReference type="PANTHER" id="PTHR21368">
    <property type="entry name" value="50S RIBOSOMAL PROTEIN L9"/>
    <property type="match status" value="1"/>
</dbReference>
<dbReference type="Pfam" id="PF03948">
    <property type="entry name" value="Ribosomal_L9_C"/>
    <property type="match status" value="1"/>
</dbReference>
<dbReference type="Pfam" id="PF01281">
    <property type="entry name" value="Ribosomal_L9_N"/>
    <property type="match status" value="1"/>
</dbReference>
<dbReference type="SUPFAM" id="SSF55658">
    <property type="entry name" value="L9 N-domain-like"/>
    <property type="match status" value="1"/>
</dbReference>
<dbReference type="SUPFAM" id="SSF55653">
    <property type="entry name" value="Ribosomal protein L9 C-domain"/>
    <property type="match status" value="1"/>
</dbReference>
<dbReference type="PROSITE" id="PS00651">
    <property type="entry name" value="RIBOSOMAL_L9"/>
    <property type="match status" value="1"/>
</dbReference>
<protein>
    <recommendedName>
        <fullName evidence="1">Large ribosomal subunit protein bL9</fullName>
    </recommendedName>
    <alternativeName>
        <fullName evidence="2">50S ribosomal protein L9</fullName>
    </alternativeName>
</protein>
<name>RL9_VIBVU</name>
<sequence>MQVILLDKIGNLGSLGDTVNVKSGYARNFLIPQGKAVMATKGNVEMFEARRAELEAKVAEQLASAEARAEKVNALEAVVIASKAGDEGKLFGSIGTRDIADAITAAGVEVVKSEVRLPEGALRTTGEFEISVQLHSEVFATVKLQVVAE</sequence>
<organism>
    <name type="scientific">Vibrio vulnificus (strain CMCP6)</name>
    <dbReference type="NCBI Taxonomy" id="216895"/>
    <lineage>
        <taxon>Bacteria</taxon>
        <taxon>Pseudomonadati</taxon>
        <taxon>Pseudomonadota</taxon>
        <taxon>Gammaproteobacteria</taxon>
        <taxon>Vibrionales</taxon>
        <taxon>Vibrionaceae</taxon>
        <taxon>Vibrio</taxon>
    </lineage>
</organism>
<comment type="function">
    <text evidence="1">Binds to the 23S rRNA.</text>
</comment>
<comment type="similarity">
    <text evidence="1">Belongs to the bacterial ribosomal protein bL9 family.</text>
</comment>
<evidence type="ECO:0000255" key="1">
    <source>
        <dbReference type="HAMAP-Rule" id="MF_00503"/>
    </source>
</evidence>
<evidence type="ECO:0000305" key="2"/>
<reference key="1">
    <citation type="submission" date="2002-12" db="EMBL/GenBank/DDBJ databases">
        <title>Complete genome sequence of Vibrio vulnificus CMCP6.</title>
        <authorList>
            <person name="Rhee J.H."/>
            <person name="Kim S.Y."/>
            <person name="Chung S.S."/>
            <person name="Kim J.J."/>
            <person name="Moon Y.H."/>
            <person name="Jeong H."/>
            <person name="Choy H.E."/>
        </authorList>
    </citation>
    <scope>NUCLEOTIDE SEQUENCE [LARGE SCALE GENOMIC DNA]</scope>
    <source>
        <strain>CMCP6</strain>
    </source>
</reference>